<comment type="function">
    <text evidence="1">Catalyzes the phosphorylation of the position 2 hydroxy group of 4-diphosphocytidyl-2C-methyl-D-erythritol.</text>
</comment>
<comment type="catalytic activity">
    <reaction evidence="1">
        <text>4-CDP-2-C-methyl-D-erythritol + ATP = 4-CDP-2-C-methyl-D-erythritol 2-phosphate + ADP + H(+)</text>
        <dbReference type="Rhea" id="RHEA:18437"/>
        <dbReference type="ChEBI" id="CHEBI:15378"/>
        <dbReference type="ChEBI" id="CHEBI:30616"/>
        <dbReference type="ChEBI" id="CHEBI:57823"/>
        <dbReference type="ChEBI" id="CHEBI:57919"/>
        <dbReference type="ChEBI" id="CHEBI:456216"/>
        <dbReference type="EC" id="2.7.1.148"/>
    </reaction>
</comment>
<comment type="pathway">
    <text evidence="1">Isoprenoid biosynthesis; isopentenyl diphosphate biosynthesis via DXP pathway; isopentenyl diphosphate from 1-deoxy-D-xylulose 5-phosphate: step 3/6.</text>
</comment>
<comment type="similarity">
    <text evidence="1">Belongs to the GHMP kinase family. IspE subfamily.</text>
</comment>
<protein>
    <recommendedName>
        <fullName evidence="1">4-diphosphocytidyl-2-C-methyl-D-erythritol kinase</fullName>
        <shortName evidence="1">CMK</shortName>
        <ecNumber evidence="1">2.7.1.148</ecNumber>
    </recommendedName>
    <alternativeName>
        <fullName evidence="1">4-(cytidine-5'-diphospho)-2-C-methyl-D-erythritol kinase</fullName>
    </alternativeName>
</protein>
<keyword id="KW-0067">ATP-binding</keyword>
<keyword id="KW-0414">Isoprene biosynthesis</keyword>
<keyword id="KW-0418">Kinase</keyword>
<keyword id="KW-0547">Nucleotide-binding</keyword>
<keyword id="KW-0808">Transferase</keyword>
<evidence type="ECO:0000255" key="1">
    <source>
        <dbReference type="HAMAP-Rule" id="MF_00061"/>
    </source>
</evidence>
<proteinExistence type="inferred from homology"/>
<reference key="1">
    <citation type="submission" date="2006-08" db="EMBL/GenBank/DDBJ databases">
        <title>Complete sequence of Shewanella sp. MR-4.</title>
        <authorList>
            <consortium name="US DOE Joint Genome Institute"/>
            <person name="Copeland A."/>
            <person name="Lucas S."/>
            <person name="Lapidus A."/>
            <person name="Barry K."/>
            <person name="Detter J.C."/>
            <person name="Glavina del Rio T."/>
            <person name="Hammon N."/>
            <person name="Israni S."/>
            <person name="Dalin E."/>
            <person name="Tice H."/>
            <person name="Pitluck S."/>
            <person name="Kiss H."/>
            <person name="Brettin T."/>
            <person name="Bruce D."/>
            <person name="Han C."/>
            <person name="Tapia R."/>
            <person name="Gilna P."/>
            <person name="Schmutz J."/>
            <person name="Larimer F."/>
            <person name="Land M."/>
            <person name="Hauser L."/>
            <person name="Kyrpides N."/>
            <person name="Mikhailova N."/>
            <person name="Nealson K."/>
            <person name="Konstantinidis K."/>
            <person name="Klappenbach J."/>
            <person name="Tiedje J."/>
            <person name="Richardson P."/>
        </authorList>
    </citation>
    <scope>NUCLEOTIDE SEQUENCE [LARGE SCALE GENOMIC DNA]</scope>
    <source>
        <strain>MR-4</strain>
    </source>
</reference>
<name>ISPE_SHESM</name>
<sequence length="284" mass="30814">MSNEISRNWPAPAKLNLFLHINGRRADGYHELQTLFQFIDCCDLLDFRVTQTPEQILHSDMSAVVADSDNLILRAAKSLQQATGYPGGAEIWLEKRLPMGGGLGGGSSDAATTLVALNQLWDTQLSNDELATIGLKLGADIPVFIRGFAAFAEGVGERLQAVTPTEFWYLVIAPDAHVSTAAVFQDPLLPRNTPKLGIDTLMSQPWANDCQDLVVSKYPQVAKALAWLLEYAPSRMTGTGACVFGEFSSQQQALAALAKLPSDMQGFVAKGMNISPLIVRLNRP</sequence>
<feature type="chain" id="PRO_1000007892" description="4-diphosphocytidyl-2-C-methyl-D-erythritol kinase">
    <location>
        <begin position="1"/>
        <end position="284"/>
    </location>
</feature>
<feature type="active site" evidence="1">
    <location>
        <position position="14"/>
    </location>
</feature>
<feature type="active site" evidence="1">
    <location>
        <position position="140"/>
    </location>
</feature>
<feature type="binding site" evidence="1">
    <location>
        <begin position="98"/>
        <end position="108"/>
    </location>
    <ligand>
        <name>ATP</name>
        <dbReference type="ChEBI" id="CHEBI:30616"/>
    </ligand>
</feature>
<organism>
    <name type="scientific">Shewanella sp. (strain MR-4)</name>
    <dbReference type="NCBI Taxonomy" id="60480"/>
    <lineage>
        <taxon>Bacteria</taxon>
        <taxon>Pseudomonadati</taxon>
        <taxon>Pseudomonadota</taxon>
        <taxon>Gammaproteobacteria</taxon>
        <taxon>Alteromonadales</taxon>
        <taxon>Shewanellaceae</taxon>
        <taxon>Shewanella</taxon>
    </lineage>
</organism>
<dbReference type="EC" id="2.7.1.148" evidence="1"/>
<dbReference type="EMBL" id="CP000446">
    <property type="protein sequence ID" value="ABI40242.1"/>
    <property type="molecule type" value="Genomic_DNA"/>
</dbReference>
<dbReference type="RefSeq" id="WP_011623914.1">
    <property type="nucleotide sequence ID" value="NC_008321.1"/>
</dbReference>
<dbReference type="SMR" id="Q0HFC5"/>
<dbReference type="KEGG" id="she:Shewmr4_3172"/>
<dbReference type="HOGENOM" id="CLU_053057_3_0_6"/>
<dbReference type="UniPathway" id="UPA00056">
    <property type="reaction ID" value="UER00094"/>
</dbReference>
<dbReference type="GO" id="GO:0050515">
    <property type="term" value="F:4-(cytidine 5'-diphospho)-2-C-methyl-D-erythritol kinase activity"/>
    <property type="evidence" value="ECO:0007669"/>
    <property type="project" value="UniProtKB-UniRule"/>
</dbReference>
<dbReference type="GO" id="GO:0005524">
    <property type="term" value="F:ATP binding"/>
    <property type="evidence" value="ECO:0007669"/>
    <property type="project" value="UniProtKB-UniRule"/>
</dbReference>
<dbReference type="GO" id="GO:0019288">
    <property type="term" value="P:isopentenyl diphosphate biosynthetic process, methylerythritol 4-phosphate pathway"/>
    <property type="evidence" value="ECO:0007669"/>
    <property type="project" value="UniProtKB-UniRule"/>
</dbReference>
<dbReference type="GO" id="GO:0016114">
    <property type="term" value="P:terpenoid biosynthetic process"/>
    <property type="evidence" value="ECO:0007669"/>
    <property type="project" value="InterPro"/>
</dbReference>
<dbReference type="FunFam" id="3.30.230.10:FF:000022">
    <property type="entry name" value="4-diphosphocytidyl-2-C-methyl-D-erythritol kinase"/>
    <property type="match status" value="1"/>
</dbReference>
<dbReference type="Gene3D" id="3.30.230.10">
    <property type="match status" value="1"/>
</dbReference>
<dbReference type="Gene3D" id="3.30.70.890">
    <property type="entry name" value="GHMP kinase, C-terminal domain"/>
    <property type="match status" value="1"/>
</dbReference>
<dbReference type="HAMAP" id="MF_00061">
    <property type="entry name" value="IspE"/>
    <property type="match status" value="1"/>
</dbReference>
<dbReference type="InterPro" id="IPR013750">
    <property type="entry name" value="GHMP_kinase_C_dom"/>
</dbReference>
<dbReference type="InterPro" id="IPR036554">
    <property type="entry name" value="GHMP_kinase_C_sf"/>
</dbReference>
<dbReference type="InterPro" id="IPR006204">
    <property type="entry name" value="GHMP_kinase_N_dom"/>
</dbReference>
<dbReference type="InterPro" id="IPR004424">
    <property type="entry name" value="IspE"/>
</dbReference>
<dbReference type="InterPro" id="IPR020568">
    <property type="entry name" value="Ribosomal_Su5_D2-typ_SF"/>
</dbReference>
<dbReference type="InterPro" id="IPR014721">
    <property type="entry name" value="Ribsml_uS5_D2-typ_fold_subgr"/>
</dbReference>
<dbReference type="NCBIfam" id="TIGR00154">
    <property type="entry name" value="ispE"/>
    <property type="match status" value="1"/>
</dbReference>
<dbReference type="PANTHER" id="PTHR43527">
    <property type="entry name" value="4-DIPHOSPHOCYTIDYL-2-C-METHYL-D-ERYTHRITOL KINASE, CHLOROPLASTIC"/>
    <property type="match status" value="1"/>
</dbReference>
<dbReference type="PANTHER" id="PTHR43527:SF2">
    <property type="entry name" value="4-DIPHOSPHOCYTIDYL-2-C-METHYL-D-ERYTHRITOL KINASE, CHLOROPLASTIC"/>
    <property type="match status" value="1"/>
</dbReference>
<dbReference type="Pfam" id="PF08544">
    <property type="entry name" value="GHMP_kinases_C"/>
    <property type="match status" value="1"/>
</dbReference>
<dbReference type="Pfam" id="PF00288">
    <property type="entry name" value="GHMP_kinases_N"/>
    <property type="match status" value="1"/>
</dbReference>
<dbReference type="PIRSF" id="PIRSF010376">
    <property type="entry name" value="IspE"/>
    <property type="match status" value="1"/>
</dbReference>
<dbReference type="SUPFAM" id="SSF55060">
    <property type="entry name" value="GHMP Kinase, C-terminal domain"/>
    <property type="match status" value="1"/>
</dbReference>
<dbReference type="SUPFAM" id="SSF54211">
    <property type="entry name" value="Ribosomal protein S5 domain 2-like"/>
    <property type="match status" value="1"/>
</dbReference>
<gene>
    <name evidence="1" type="primary">ispE</name>
    <name type="ordered locus">Shewmr4_3172</name>
</gene>
<accession>Q0HFC5</accession>